<proteinExistence type="inferred from homology"/>
<keyword id="KW-0067">ATP-binding</keyword>
<keyword id="KW-0227">DNA damage</keyword>
<keyword id="KW-0234">DNA repair</keyword>
<keyword id="KW-0238">DNA-binding</keyword>
<keyword id="KW-0269">Exonuclease</keyword>
<keyword id="KW-0347">Helicase</keyword>
<keyword id="KW-0378">Hydrolase</keyword>
<keyword id="KW-0413">Isomerase</keyword>
<keyword id="KW-0540">Nuclease</keyword>
<keyword id="KW-0547">Nucleotide-binding</keyword>
<gene>
    <name evidence="1" type="primary">addA</name>
    <name type="synonym">rexA</name>
    <name type="ordered locus">spyM18_0836</name>
</gene>
<organism>
    <name type="scientific">Streptococcus pyogenes serotype M18 (strain MGAS8232)</name>
    <dbReference type="NCBI Taxonomy" id="186103"/>
    <lineage>
        <taxon>Bacteria</taxon>
        <taxon>Bacillati</taxon>
        <taxon>Bacillota</taxon>
        <taxon>Bacilli</taxon>
        <taxon>Lactobacillales</taxon>
        <taxon>Streptococcaceae</taxon>
        <taxon>Streptococcus</taxon>
    </lineage>
</organism>
<comment type="function">
    <text evidence="1">The heterodimer acts as both an ATP-dependent DNA helicase and an ATP-dependent, dual-direction single-stranded exonuclease. Recognizes the chi site generating a DNA molecule suitable for the initiation of homologous recombination. The AddA nuclease domain is required for chi fragment generation; this subunit has the helicase and 3' -&gt; 5' nuclease activities.</text>
</comment>
<comment type="catalytic activity">
    <reaction evidence="1">
        <text>Couples ATP hydrolysis with the unwinding of duplex DNA by translocating in the 3'-5' direction.</text>
        <dbReference type="EC" id="5.6.2.4"/>
    </reaction>
</comment>
<comment type="catalytic activity">
    <reaction evidence="1">
        <text>ATP + H2O = ADP + phosphate + H(+)</text>
        <dbReference type="Rhea" id="RHEA:13065"/>
        <dbReference type="ChEBI" id="CHEBI:15377"/>
        <dbReference type="ChEBI" id="CHEBI:15378"/>
        <dbReference type="ChEBI" id="CHEBI:30616"/>
        <dbReference type="ChEBI" id="CHEBI:43474"/>
        <dbReference type="ChEBI" id="CHEBI:456216"/>
        <dbReference type="EC" id="5.6.2.4"/>
    </reaction>
</comment>
<comment type="cofactor">
    <cofactor evidence="1">
        <name>Mg(2+)</name>
        <dbReference type="ChEBI" id="CHEBI:18420"/>
    </cofactor>
</comment>
<comment type="subunit">
    <text evidence="1">Heterodimer of AddA and AddB/RexB.</text>
</comment>
<comment type="similarity">
    <text evidence="1">Belongs to the helicase family. AddA subfamily.</text>
</comment>
<accession>Q8P1J2</accession>
<dbReference type="EC" id="3.1.-.-" evidence="1"/>
<dbReference type="EC" id="5.6.2.4" evidence="1"/>
<dbReference type="EMBL" id="AE009949">
    <property type="protein sequence ID" value="AAL97496.1"/>
    <property type="molecule type" value="Genomic_DNA"/>
</dbReference>
<dbReference type="SMR" id="Q8P1J2"/>
<dbReference type="KEGG" id="spm:spyM18_0836"/>
<dbReference type="HOGENOM" id="CLU_001114_3_1_9"/>
<dbReference type="GO" id="GO:0005829">
    <property type="term" value="C:cytosol"/>
    <property type="evidence" value="ECO:0007669"/>
    <property type="project" value="TreeGrafter"/>
</dbReference>
<dbReference type="GO" id="GO:0033202">
    <property type="term" value="C:DNA helicase complex"/>
    <property type="evidence" value="ECO:0007669"/>
    <property type="project" value="TreeGrafter"/>
</dbReference>
<dbReference type="GO" id="GO:0043138">
    <property type="term" value="F:3'-5' DNA helicase activity"/>
    <property type="evidence" value="ECO:0007669"/>
    <property type="project" value="UniProtKB-UniRule"/>
</dbReference>
<dbReference type="GO" id="GO:0008408">
    <property type="term" value="F:3'-5' exonuclease activity"/>
    <property type="evidence" value="ECO:0007669"/>
    <property type="project" value="UniProtKB-UniRule"/>
</dbReference>
<dbReference type="GO" id="GO:0005524">
    <property type="term" value="F:ATP binding"/>
    <property type="evidence" value="ECO:0007669"/>
    <property type="project" value="UniProtKB-UniRule"/>
</dbReference>
<dbReference type="GO" id="GO:0016887">
    <property type="term" value="F:ATP hydrolysis activity"/>
    <property type="evidence" value="ECO:0007669"/>
    <property type="project" value="RHEA"/>
</dbReference>
<dbReference type="GO" id="GO:0003690">
    <property type="term" value="F:double-stranded DNA binding"/>
    <property type="evidence" value="ECO:0007669"/>
    <property type="project" value="UniProtKB-UniRule"/>
</dbReference>
<dbReference type="GO" id="GO:0000724">
    <property type="term" value="P:double-strand break repair via homologous recombination"/>
    <property type="evidence" value="ECO:0007669"/>
    <property type="project" value="UniProtKB-UniRule"/>
</dbReference>
<dbReference type="CDD" id="cd17932">
    <property type="entry name" value="DEXQc_UvrD"/>
    <property type="match status" value="1"/>
</dbReference>
<dbReference type="Gene3D" id="3.90.320.10">
    <property type="match status" value="1"/>
</dbReference>
<dbReference type="Gene3D" id="3.40.50.300">
    <property type="entry name" value="P-loop containing nucleotide triphosphate hydrolases"/>
    <property type="match status" value="4"/>
</dbReference>
<dbReference type="Gene3D" id="1.10.486.10">
    <property type="entry name" value="PCRA, domain 4"/>
    <property type="match status" value="1"/>
</dbReference>
<dbReference type="HAMAP" id="MF_01451">
    <property type="entry name" value="AddA"/>
    <property type="match status" value="1"/>
</dbReference>
<dbReference type="InterPro" id="IPR014152">
    <property type="entry name" value="AddA"/>
</dbReference>
<dbReference type="InterPro" id="IPR014017">
    <property type="entry name" value="DNA_helicase_UvrD-like_C"/>
</dbReference>
<dbReference type="InterPro" id="IPR000212">
    <property type="entry name" value="DNA_helicase_UvrD/REP"/>
</dbReference>
<dbReference type="InterPro" id="IPR027417">
    <property type="entry name" value="P-loop_NTPase"/>
</dbReference>
<dbReference type="InterPro" id="IPR011604">
    <property type="entry name" value="PDDEXK-like_dom_sf"/>
</dbReference>
<dbReference type="InterPro" id="IPR038726">
    <property type="entry name" value="PDDEXK_AddAB-type"/>
</dbReference>
<dbReference type="InterPro" id="IPR011335">
    <property type="entry name" value="Restrct_endonuc-II-like"/>
</dbReference>
<dbReference type="InterPro" id="IPR014016">
    <property type="entry name" value="UvrD-like_ATP-bd"/>
</dbReference>
<dbReference type="NCBIfam" id="TIGR02785">
    <property type="entry name" value="addA_Gpos"/>
    <property type="match status" value="1"/>
</dbReference>
<dbReference type="PANTHER" id="PTHR11070:SF48">
    <property type="entry name" value="ATP-DEPENDENT HELICASE_NUCLEASE SUBUNIT A"/>
    <property type="match status" value="1"/>
</dbReference>
<dbReference type="PANTHER" id="PTHR11070">
    <property type="entry name" value="UVRD / RECB / PCRA DNA HELICASE FAMILY MEMBER"/>
    <property type="match status" value="1"/>
</dbReference>
<dbReference type="Pfam" id="PF12705">
    <property type="entry name" value="PDDEXK_1"/>
    <property type="match status" value="1"/>
</dbReference>
<dbReference type="Pfam" id="PF00580">
    <property type="entry name" value="UvrD-helicase"/>
    <property type="match status" value="1"/>
</dbReference>
<dbReference type="Pfam" id="PF13361">
    <property type="entry name" value="UvrD_C"/>
    <property type="match status" value="1"/>
</dbReference>
<dbReference type="SUPFAM" id="SSF52540">
    <property type="entry name" value="P-loop containing nucleoside triphosphate hydrolases"/>
    <property type="match status" value="1"/>
</dbReference>
<dbReference type="SUPFAM" id="SSF52980">
    <property type="entry name" value="Restriction endonuclease-like"/>
    <property type="match status" value="1"/>
</dbReference>
<dbReference type="PROSITE" id="PS51198">
    <property type="entry name" value="UVRD_HELICASE_ATP_BIND"/>
    <property type="match status" value="1"/>
</dbReference>
<dbReference type="PROSITE" id="PS51217">
    <property type="entry name" value="UVRD_HELICASE_CTER"/>
    <property type="match status" value="1"/>
</dbReference>
<reference key="1">
    <citation type="journal article" date="2002" name="Proc. Natl. Acad. Sci. U.S.A.">
        <title>Genome sequence and comparative microarray analysis of serotype M18 group A Streptococcus strains associated with acute rheumatic fever outbreaks.</title>
        <authorList>
            <person name="Smoot J.C."/>
            <person name="Barbian K.D."/>
            <person name="Van Gompel J.J."/>
            <person name="Smoot L.M."/>
            <person name="Chaussee M.S."/>
            <person name="Sylva G.L."/>
            <person name="Sturdevant D.E."/>
            <person name="Ricklefs S.M."/>
            <person name="Porcella S.F."/>
            <person name="Parkins L.D."/>
            <person name="Beres S.B."/>
            <person name="Campbell D.S."/>
            <person name="Smith T.M."/>
            <person name="Zhang Q."/>
            <person name="Kapur V."/>
            <person name="Daly J.A."/>
            <person name="Veasy L.G."/>
            <person name="Musser J.M."/>
        </authorList>
    </citation>
    <scope>NUCLEOTIDE SEQUENCE [LARGE SCALE GENOMIC DNA]</scope>
    <source>
        <strain>MGAS8232</strain>
    </source>
</reference>
<protein>
    <recommendedName>
        <fullName evidence="1">ATP-dependent helicase/nuclease subunit A</fullName>
        <ecNumber evidence="1">3.1.-.-</ecNumber>
        <ecNumber evidence="1">5.6.2.4</ecNumber>
    </recommendedName>
    <alternativeName>
        <fullName evidence="1">ATP-dependent helicase/nuclease AddA</fullName>
    </alternativeName>
    <alternativeName>
        <fullName evidence="1">DNA 3'-5' helicase AddA</fullName>
    </alternativeName>
</protein>
<evidence type="ECO:0000255" key="1">
    <source>
        <dbReference type="HAMAP-Rule" id="MF_01451"/>
    </source>
</evidence>
<name>ADDA_STRP8</name>
<sequence>MLFNINEKGEPLVISFAPFLSPEAIKYLQENERCSDQSQKRTAQQIEAIYTSGQNILVSASAGSGKTFVMVERILDKILRGVSIDRLFISTFTVKAATELRERIENKLYSQIAQTTDFQMKVYLTEQLQSLCQADIGTMDAFAQKVVSRYGYSIGISSQFRIMQDKAEQDVLKQEVFSKLFSEFMNQKEAPVFRALVKNFSGNCKDTSAFRELVYTCYSFSQSTENPKIWLQENFLSAAKTYQRLEDIPDHDIELLLLAMQDTANQLRDVTDMEDYGQLTKAGSRSAKYTKHLTIIEKLSDWVRDFKCLYGKAGLDRLIRDVTGLIPSGNDVTVSKVKYPVFKTLHQKLKQFRHLETILMYQKDCFPLLEQLQDFVLAFSEAYLAVKIQESAFEFSDIAHFAIKILEENTDIRQSYQQHYHEVMVDEYQDNNHMQERLLTLLSNGHNRFMVGDIKQSIYRFRQADPQIFNQKFRDYQKKTEQGKVILLKENFRSQSEVLNVSNAVFSHLMDESVGDALYDEQHQLIAGSHAQTVPYLDRRAQLLLYNSDKDDGNAPSDSEGISFSEVTIVAKEIIKLHNDKGVPFEDITLLVSSRTRNDIISHTFNQYGIPIVTDGGQQNYLKSVEVMVMLDTLRTINNPRNDYALVALLRSPMFAFDEDDLARIALQKDNELDKDCLYDKIQRAVIGRGAHPELIHDTLLGKLNIFLKTLKSWRRYAKLGSLYDLIWKIFNDRFYFDFVASQAKAEQAQANLYALALRANQFEKSGYKGLYRFIKMIDKVLETQNDLADVEVAAPKQAVNLMTIHKSKGLQFPYVFILNCDKRFSMTDIHKSFILNRQHGIGIKYLADIKGLLGETTLNSVKVSMETLPYQLNKQELRLATLSEQMRLLYVAMTRAEKKVYFIGKASKSKSQDITDPKKLGKLLSLALREQLLTFQDWLLAIADIFSTEDLYFDVRFIEDSDLTQESVGRLQTPQLLNPDDLKDNRQSETIARALDMLEAVSQLNANYEAAIHLPTVRTPSQLKVTYEPLLEPIGVDIIEKSSRSLSDFTLPHFSKKAKVEASHIGSALHQLMQVLPLSKPINQQTLLDALRGIDSNEEVKTALDLKKIESFFCDTSLGQFFQTYQKHLYREAPFAILKLDPISQEEYVLRGIIDAYFLFDDHIVLVDYKTDKYKQPIELKKRYQQQLELYAEALTQTYKLPVTKRYLVLMGGGKPEIVEV</sequence>
<feature type="chain" id="PRO_0000379343" description="ATP-dependent helicase/nuclease subunit A">
    <location>
        <begin position="1"/>
        <end position="1222"/>
    </location>
</feature>
<feature type="domain" description="UvrD-like helicase ATP-binding" evidence="1">
    <location>
        <begin position="39"/>
        <end position="495"/>
    </location>
</feature>
<feature type="domain" description="UvrD-like helicase C-terminal" evidence="1">
    <location>
        <begin position="524"/>
        <end position="810"/>
    </location>
</feature>
<feature type="binding site" evidence="1">
    <location>
        <begin position="60"/>
        <end position="67"/>
    </location>
    <ligand>
        <name>ATP</name>
        <dbReference type="ChEBI" id="CHEBI:30616"/>
    </ligand>
</feature>